<organism>
    <name type="scientific">Methanosarcina acetivorans (strain ATCC 35395 / DSM 2834 / JCM 12185 / C2A)</name>
    <dbReference type="NCBI Taxonomy" id="188937"/>
    <lineage>
        <taxon>Archaea</taxon>
        <taxon>Methanobacteriati</taxon>
        <taxon>Methanobacteriota</taxon>
        <taxon>Stenosarchaea group</taxon>
        <taxon>Methanomicrobia</taxon>
        <taxon>Methanosarcinales</taxon>
        <taxon>Methanosarcinaceae</taxon>
        <taxon>Methanosarcina</taxon>
    </lineage>
</organism>
<proteinExistence type="inferred from homology"/>
<reference key="1">
    <citation type="journal article" date="2002" name="Genome Res.">
        <title>The genome of Methanosarcina acetivorans reveals extensive metabolic and physiological diversity.</title>
        <authorList>
            <person name="Galagan J.E."/>
            <person name="Nusbaum C."/>
            <person name="Roy A."/>
            <person name="Endrizzi M.G."/>
            <person name="Macdonald P."/>
            <person name="FitzHugh W."/>
            <person name="Calvo S."/>
            <person name="Engels R."/>
            <person name="Smirnov S."/>
            <person name="Atnoor D."/>
            <person name="Brown A."/>
            <person name="Allen N."/>
            <person name="Naylor J."/>
            <person name="Stange-Thomann N."/>
            <person name="DeArellano K."/>
            <person name="Johnson R."/>
            <person name="Linton L."/>
            <person name="McEwan P."/>
            <person name="McKernan K."/>
            <person name="Talamas J."/>
            <person name="Tirrell A."/>
            <person name="Ye W."/>
            <person name="Zimmer A."/>
            <person name="Barber R.D."/>
            <person name="Cann I."/>
            <person name="Graham D.E."/>
            <person name="Grahame D.A."/>
            <person name="Guss A.M."/>
            <person name="Hedderich R."/>
            <person name="Ingram-Smith C."/>
            <person name="Kuettner H.C."/>
            <person name="Krzycki J.A."/>
            <person name="Leigh J.A."/>
            <person name="Li W."/>
            <person name="Liu J."/>
            <person name="Mukhopadhyay B."/>
            <person name="Reeve J.N."/>
            <person name="Smith K."/>
            <person name="Springer T.A."/>
            <person name="Umayam L.A."/>
            <person name="White O."/>
            <person name="White R.H."/>
            <person name="de Macario E.C."/>
            <person name="Ferry J.G."/>
            <person name="Jarrell K.F."/>
            <person name="Jing H."/>
            <person name="Macario A.J.L."/>
            <person name="Paulsen I.T."/>
            <person name="Pritchett M."/>
            <person name="Sowers K.R."/>
            <person name="Swanson R.V."/>
            <person name="Zinder S.H."/>
            <person name="Lander E."/>
            <person name="Metcalf W.W."/>
            <person name="Birren B."/>
        </authorList>
    </citation>
    <scope>NUCLEOTIDE SEQUENCE [LARGE SCALE GENOMIC DNA]</scope>
    <source>
        <strain>ATCC 35395 / DSM 2834 / JCM 12185 / C2A</strain>
    </source>
</reference>
<feature type="chain" id="PRO_0000216565" description="Dimethylamine methyltransferase MtbB3">
    <location>
        <begin position="1"/>
        <end position="467"/>
    </location>
</feature>
<feature type="non-standard amino acid" description="Pyrrolysine" evidence="1">
    <location>
        <position position="356"/>
    </location>
</feature>
<evidence type="ECO:0000250" key="1"/>
<evidence type="ECO:0000305" key="2"/>
<accession>Q8TN68</accession>
<name>MTBB3_METAC</name>
<gene>
    <name type="primary">mtbB3</name>
    <name type="ordered locus">MA_2425</name>
</gene>
<comment type="function">
    <text evidence="1">Catalyzes the transfer of a methyl group from dimethylamine to the corrinoid cofactor of MtbC.</text>
</comment>
<comment type="catalytic activity">
    <reaction>
        <text>Co(I)-[dimethylamine-specific corrinoid protein] + dimethylamine + H(+) = methyl-Co(III)-[dimethylamine-specific corrinoid protein] + methylamine</text>
        <dbReference type="Rhea" id="RHEA:41175"/>
        <dbReference type="Rhea" id="RHEA-COMP:11122"/>
        <dbReference type="Rhea" id="RHEA-COMP:11123"/>
        <dbReference type="ChEBI" id="CHEBI:15378"/>
        <dbReference type="ChEBI" id="CHEBI:58040"/>
        <dbReference type="ChEBI" id="CHEBI:59338"/>
        <dbReference type="ChEBI" id="CHEBI:85033"/>
        <dbReference type="ChEBI" id="CHEBI:85035"/>
        <dbReference type="EC" id="2.1.1.249"/>
    </reaction>
</comment>
<comment type="pathway">
    <text>One-carbon metabolism; methanogenesis from dimethylamine.</text>
</comment>
<comment type="similarity">
    <text evidence="2">Belongs to the dimethylamine methyltransferase family.</text>
</comment>
<dbReference type="EC" id="2.1.1.249"/>
<dbReference type="EMBL" id="AE010299">
    <property type="protein sequence ID" value="AAM05811.1"/>
    <property type="molecule type" value="Genomic_DNA"/>
</dbReference>
<dbReference type="STRING" id="188937.MA_2425"/>
<dbReference type="KEGG" id="mac:MA_2425"/>
<dbReference type="HOGENOM" id="CLU_046512_0_0_2"/>
<dbReference type="InParanoid" id="Q8TN68"/>
<dbReference type="PhylomeDB" id="Q8TN68"/>
<dbReference type="UniPathway" id="UPA00644"/>
<dbReference type="Proteomes" id="UP000002487">
    <property type="component" value="Chromosome"/>
</dbReference>
<dbReference type="GO" id="GO:0043791">
    <property type="term" value="F:dimethylamine methyltransferase activity"/>
    <property type="evidence" value="ECO:0007669"/>
    <property type="project" value="UniProtKB-EC"/>
</dbReference>
<dbReference type="GO" id="GO:0015948">
    <property type="term" value="P:methanogenesis"/>
    <property type="evidence" value="ECO:0007669"/>
    <property type="project" value="UniProtKB-KW"/>
</dbReference>
<dbReference type="GO" id="GO:0032259">
    <property type="term" value="P:methylation"/>
    <property type="evidence" value="ECO:0007669"/>
    <property type="project" value="UniProtKB-KW"/>
</dbReference>
<dbReference type="InterPro" id="IPR012653">
    <property type="entry name" value="Dimeth_MeTrfase_MtbB"/>
</dbReference>
<dbReference type="NCBIfam" id="TIGR02368">
    <property type="entry name" value="dimeth_PyL"/>
    <property type="match status" value="1"/>
</dbReference>
<dbReference type="Pfam" id="PF09505">
    <property type="entry name" value="Dimeth_Pyl"/>
    <property type="match status" value="1"/>
</dbReference>
<sequence length="467" mass="50414">MATEYALRMGDGKRIYLTKEKILSEIEAGSSNAADLGDIPDLSTDEMKKLAEILMMPGKAVSVEQGMEVPVTHDIGTIRLDGDQGNSGVGIPSSRLVGCMTHERAFGADTMELGHIDYSFKPVKPVVSNECQAMEVCQQNMIIPLFYGAMPNMGLYYTPDGPFENPGDLMKMFKIDKARESMEHAADHLTRDTVWVMQKLFASGADGVNFDTTAAAGDADMYGTLRAVEVLRAQFPEMYIEVGMAGEMVLGMHGELEYDEVRLAGLWPHEQAPLIAKAGANVFGPVVNTNTSKTSAWNLARAVTFIKEAVKASPIPCHVNMGMGVGGIPMLETPPVDAVTRASKAMVEVAGVDGIOIGVGDPLGMPISHIMASGMTGIRAAGDLVARMEFSKNMRIGEAKEYVAKKLNVDTMDLADEHVMRELREELDIGVITSVPGAAKGIAAKMNIEKLLGIKINSCETFRAQLA</sequence>
<keyword id="KW-0484">Methanogenesis</keyword>
<keyword id="KW-0489">Methyltransferase</keyword>
<keyword id="KW-0669">Pyrrolysine</keyword>
<keyword id="KW-1185">Reference proteome</keyword>
<keyword id="KW-0808">Transferase</keyword>
<protein>
    <recommendedName>
        <fullName>Dimethylamine methyltransferase MtbB3</fullName>
        <shortName>DMA methyltransferase 3</shortName>
        <shortName>DMAMT 3</shortName>
        <ecNumber>2.1.1.249</ecNumber>
    </recommendedName>
    <alternativeName>
        <fullName>Dimethylamine--corrinoid protein methyltransferase 3</fullName>
    </alternativeName>
</protein>